<dbReference type="EMBL" id="CP001043">
    <property type="protein sequence ID" value="ACC70598.1"/>
    <property type="molecule type" value="Genomic_DNA"/>
</dbReference>
<dbReference type="RefSeq" id="WP_012400811.1">
    <property type="nucleotide sequence ID" value="NC_010622.1"/>
</dbReference>
<dbReference type="SMR" id="B2JIU7"/>
<dbReference type="STRING" id="391038.Bphy_1416"/>
<dbReference type="KEGG" id="bph:Bphy_1416"/>
<dbReference type="eggNOG" id="COG1160">
    <property type="taxonomic scope" value="Bacteria"/>
</dbReference>
<dbReference type="HOGENOM" id="CLU_016077_6_2_4"/>
<dbReference type="OrthoDB" id="9805918at2"/>
<dbReference type="Proteomes" id="UP000001192">
    <property type="component" value="Chromosome 1"/>
</dbReference>
<dbReference type="GO" id="GO:0016887">
    <property type="term" value="F:ATP hydrolysis activity"/>
    <property type="evidence" value="ECO:0007669"/>
    <property type="project" value="InterPro"/>
</dbReference>
<dbReference type="GO" id="GO:0005525">
    <property type="term" value="F:GTP binding"/>
    <property type="evidence" value="ECO:0007669"/>
    <property type="project" value="UniProtKB-UniRule"/>
</dbReference>
<dbReference type="GO" id="GO:0043022">
    <property type="term" value="F:ribosome binding"/>
    <property type="evidence" value="ECO:0007669"/>
    <property type="project" value="TreeGrafter"/>
</dbReference>
<dbReference type="GO" id="GO:0042254">
    <property type="term" value="P:ribosome biogenesis"/>
    <property type="evidence" value="ECO:0007669"/>
    <property type="project" value="UniProtKB-KW"/>
</dbReference>
<dbReference type="CDD" id="cd01894">
    <property type="entry name" value="EngA1"/>
    <property type="match status" value="1"/>
</dbReference>
<dbReference type="CDD" id="cd01895">
    <property type="entry name" value="EngA2"/>
    <property type="match status" value="1"/>
</dbReference>
<dbReference type="FunFam" id="3.30.300.20:FF:000004">
    <property type="entry name" value="GTPase Der"/>
    <property type="match status" value="1"/>
</dbReference>
<dbReference type="FunFam" id="3.40.50.300:FF:000040">
    <property type="entry name" value="GTPase Der"/>
    <property type="match status" value="1"/>
</dbReference>
<dbReference type="FunFam" id="3.40.50.300:FF:000057">
    <property type="entry name" value="GTPase Der"/>
    <property type="match status" value="1"/>
</dbReference>
<dbReference type="Gene3D" id="3.30.300.20">
    <property type="match status" value="1"/>
</dbReference>
<dbReference type="Gene3D" id="3.40.50.300">
    <property type="entry name" value="P-loop containing nucleotide triphosphate hydrolases"/>
    <property type="match status" value="2"/>
</dbReference>
<dbReference type="HAMAP" id="MF_00195">
    <property type="entry name" value="GTPase_Der"/>
    <property type="match status" value="1"/>
</dbReference>
<dbReference type="InterPro" id="IPR003593">
    <property type="entry name" value="AAA+_ATPase"/>
</dbReference>
<dbReference type="InterPro" id="IPR031166">
    <property type="entry name" value="G_ENGA"/>
</dbReference>
<dbReference type="InterPro" id="IPR006073">
    <property type="entry name" value="GTP-bd"/>
</dbReference>
<dbReference type="InterPro" id="IPR016484">
    <property type="entry name" value="GTPase_Der"/>
</dbReference>
<dbReference type="InterPro" id="IPR032859">
    <property type="entry name" value="KH_dom-like"/>
</dbReference>
<dbReference type="InterPro" id="IPR015946">
    <property type="entry name" value="KH_dom-like_a/b"/>
</dbReference>
<dbReference type="InterPro" id="IPR027417">
    <property type="entry name" value="P-loop_NTPase"/>
</dbReference>
<dbReference type="InterPro" id="IPR005225">
    <property type="entry name" value="Small_GTP-bd"/>
</dbReference>
<dbReference type="NCBIfam" id="TIGR03594">
    <property type="entry name" value="GTPase_EngA"/>
    <property type="match status" value="1"/>
</dbReference>
<dbReference type="NCBIfam" id="TIGR00231">
    <property type="entry name" value="small_GTP"/>
    <property type="match status" value="2"/>
</dbReference>
<dbReference type="PANTHER" id="PTHR43834">
    <property type="entry name" value="GTPASE DER"/>
    <property type="match status" value="1"/>
</dbReference>
<dbReference type="PANTHER" id="PTHR43834:SF6">
    <property type="entry name" value="GTPASE DER"/>
    <property type="match status" value="1"/>
</dbReference>
<dbReference type="Pfam" id="PF14714">
    <property type="entry name" value="KH_dom-like"/>
    <property type="match status" value="1"/>
</dbReference>
<dbReference type="Pfam" id="PF01926">
    <property type="entry name" value="MMR_HSR1"/>
    <property type="match status" value="2"/>
</dbReference>
<dbReference type="PIRSF" id="PIRSF006485">
    <property type="entry name" value="GTP-binding_EngA"/>
    <property type="match status" value="1"/>
</dbReference>
<dbReference type="PRINTS" id="PR00326">
    <property type="entry name" value="GTP1OBG"/>
</dbReference>
<dbReference type="SMART" id="SM00382">
    <property type="entry name" value="AAA"/>
    <property type="match status" value="2"/>
</dbReference>
<dbReference type="SUPFAM" id="SSF52540">
    <property type="entry name" value="P-loop containing nucleoside triphosphate hydrolases"/>
    <property type="match status" value="2"/>
</dbReference>
<dbReference type="PROSITE" id="PS51712">
    <property type="entry name" value="G_ENGA"/>
    <property type="match status" value="2"/>
</dbReference>
<evidence type="ECO:0000255" key="1">
    <source>
        <dbReference type="HAMAP-Rule" id="MF_00195"/>
    </source>
</evidence>
<gene>
    <name evidence="1" type="primary">der</name>
    <name type="synonym">engA</name>
    <name type="ordered locus">Bphy_1416</name>
</gene>
<name>DER_PARP8</name>
<organism>
    <name type="scientific">Paraburkholderia phymatum (strain DSM 17167 / CIP 108236 / LMG 21445 / STM815)</name>
    <name type="common">Burkholderia phymatum</name>
    <dbReference type="NCBI Taxonomy" id="391038"/>
    <lineage>
        <taxon>Bacteria</taxon>
        <taxon>Pseudomonadati</taxon>
        <taxon>Pseudomonadota</taxon>
        <taxon>Betaproteobacteria</taxon>
        <taxon>Burkholderiales</taxon>
        <taxon>Burkholderiaceae</taxon>
        <taxon>Paraburkholderia</taxon>
    </lineage>
</organism>
<protein>
    <recommendedName>
        <fullName evidence="1">GTPase Der</fullName>
    </recommendedName>
    <alternativeName>
        <fullName evidence="1">GTP-binding protein EngA</fullName>
    </alternativeName>
</protein>
<feature type="chain" id="PRO_1000099098" description="GTPase Der">
    <location>
        <begin position="1"/>
        <end position="446"/>
    </location>
</feature>
<feature type="domain" description="EngA-type G 1">
    <location>
        <begin position="3"/>
        <end position="168"/>
    </location>
</feature>
<feature type="domain" description="EngA-type G 2">
    <location>
        <begin position="181"/>
        <end position="354"/>
    </location>
</feature>
<feature type="domain" description="KH-like" evidence="1">
    <location>
        <begin position="355"/>
        <end position="439"/>
    </location>
</feature>
<feature type="binding site" evidence="1">
    <location>
        <begin position="9"/>
        <end position="16"/>
    </location>
    <ligand>
        <name>GTP</name>
        <dbReference type="ChEBI" id="CHEBI:37565"/>
        <label>1</label>
    </ligand>
</feature>
<feature type="binding site" evidence="1">
    <location>
        <begin position="57"/>
        <end position="61"/>
    </location>
    <ligand>
        <name>GTP</name>
        <dbReference type="ChEBI" id="CHEBI:37565"/>
        <label>1</label>
    </ligand>
</feature>
<feature type="binding site" evidence="1">
    <location>
        <begin position="120"/>
        <end position="123"/>
    </location>
    <ligand>
        <name>GTP</name>
        <dbReference type="ChEBI" id="CHEBI:37565"/>
        <label>1</label>
    </ligand>
</feature>
<feature type="binding site" evidence="1">
    <location>
        <begin position="187"/>
        <end position="194"/>
    </location>
    <ligand>
        <name>GTP</name>
        <dbReference type="ChEBI" id="CHEBI:37565"/>
        <label>2</label>
    </ligand>
</feature>
<feature type="binding site" evidence="1">
    <location>
        <begin position="234"/>
        <end position="238"/>
    </location>
    <ligand>
        <name>GTP</name>
        <dbReference type="ChEBI" id="CHEBI:37565"/>
        <label>2</label>
    </ligand>
</feature>
<feature type="binding site" evidence="1">
    <location>
        <begin position="299"/>
        <end position="302"/>
    </location>
    <ligand>
        <name>GTP</name>
        <dbReference type="ChEBI" id="CHEBI:37565"/>
        <label>2</label>
    </ligand>
</feature>
<comment type="function">
    <text evidence="1">GTPase that plays an essential role in the late steps of ribosome biogenesis.</text>
</comment>
<comment type="subunit">
    <text evidence="1">Associates with the 50S ribosomal subunit.</text>
</comment>
<comment type="similarity">
    <text evidence="1">Belongs to the TRAFAC class TrmE-Era-EngA-EngB-Septin-like GTPase superfamily. EngA (Der) GTPase family.</text>
</comment>
<accession>B2JIU7</accession>
<reference key="1">
    <citation type="journal article" date="2014" name="Stand. Genomic Sci.">
        <title>Complete genome sequence of Burkholderia phymatum STM815(T), a broad host range and efficient nitrogen-fixing symbiont of Mimosa species.</title>
        <authorList>
            <person name="Moulin L."/>
            <person name="Klonowska A."/>
            <person name="Caroline B."/>
            <person name="Booth K."/>
            <person name="Vriezen J.A."/>
            <person name="Melkonian R."/>
            <person name="James E.K."/>
            <person name="Young J.P."/>
            <person name="Bena G."/>
            <person name="Hauser L."/>
            <person name="Land M."/>
            <person name="Kyrpides N."/>
            <person name="Bruce D."/>
            <person name="Chain P."/>
            <person name="Copeland A."/>
            <person name="Pitluck S."/>
            <person name="Woyke T."/>
            <person name="Lizotte-Waniewski M."/>
            <person name="Bristow J."/>
            <person name="Riley M."/>
        </authorList>
    </citation>
    <scope>NUCLEOTIDE SEQUENCE [LARGE SCALE GENOMIC DNA]</scope>
    <source>
        <strain>DSM 17167 / CIP 108236 / LMG 21445 / STM815</strain>
    </source>
</reference>
<proteinExistence type="inferred from homology"/>
<sequence length="446" mass="49461">MKPVIALVGRPNVGKSTLFNRLTRSRDALVADLPGLTRDRHYGEGRVGGERPYLVVDTGGFEPVAKDGILFEMARQTRQAVEESDVIVFIVDGRNGLAPQDKSIADYLRKTGRPIFLVVNKAEGMKYTNVAADFYELGLGDPRAISAAHGDGVTEMINEALDVAYAGQPEESDEEKAQHGIKIAIVGRPNVGKSTLVNTLIGEDRVIAFDMPGTTRDSIYVDFERQGKKYTLIDTAGLRKRGKVFEAIEKFSVVKTLQSISDANVVILLLDARQDISEQDAHIAGFVVEQGRALVVGVNKWDGLDPHVRERTKSDLQRKLKFLEFAKFHFISAAEKTGIGPLMRSVDDAYKAAMSKLPTPKLTRALIEAVEFQQPRRRGPVRPKLRYAHQGGQNPPIIVIHGNALDAVTDTYKRYLENRFRETFALTGTPLRIEFRSSTNPYADKD</sequence>
<keyword id="KW-0342">GTP-binding</keyword>
<keyword id="KW-0547">Nucleotide-binding</keyword>
<keyword id="KW-1185">Reference proteome</keyword>
<keyword id="KW-0677">Repeat</keyword>
<keyword id="KW-0690">Ribosome biogenesis</keyword>